<organism>
    <name type="scientific">Photorhabdus laumondii subsp. laumondii (strain DSM 15139 / CIP 105565 / TT01)</name>
    <name type="common">Photorhabdus luminescens subsp. laumondii</name>
    <dbReference type="NCBI Taxonomy" id="243265"/>
    <lineage>
        <taxon>Bacteria</taxon>
        <taxon>Pseudomonadati</taxon>
        <taxon>Pseudomonadota</taxon>
        <taxon>Gammaproteobacteria</taxon>
        <taxon>Enterobacterales</taxon>
        <taxon>Morganellaceae</taxon>
        <taxon>Photorhabdus</taxon>
    </lineage>
</organism>
<feature type="chain" id="PRO_1000004178" description="Large ribosomal subunit protein bL33">
    <location>
        <begin position="1"/>
        <end position="55"/>
    </location>
</feature>
<proteinExistence type="inferred from homology"/>
<sequence length="55" mass="6397">MAKGIRDKIKLVSSAGTGHFYTTTKNKRTMPEKLEMKKFDPVVRQHVMYKEAKIK</sequence>
<gene>
    <name evidence="1" type="primary">rpmG</name>
    <name type="ordered locus">plu4863</name>
</gene>
<keyword id="KW-1185">Reference proteome</keyword>
<keyword id="KW-0687">Ribonucleoprotein</keyword>
<keyword id="KW-0689">Ribosomal protein</keyword>
<evidence type="ECO:0000255" key="1">
    <source>
        <dbReference type="HAMAP-Rule" id="MF_00294"/>
    </source>
</evidence>
<evidence type="ECO:0000305" key="2"/>
<comment type="similarity">
    <text evidence="1">Belongs to the bacterial ribosomal protein bL33 family.</text>
</comment>
<reference key="1">
    <citation type="journal article" date="2003" name="Nat. Biotechnol.">
        <title>The genome sequence of the entomopathogenic bacterium Photorhabdus luminescens.</title>
        <authorList>
            <person name="Duchaud E."/>
            <person name="Rusniok C."/>
            <person name="Frangeul L."/>
            <person name="Buchrieser C."/>
            <person name="Givaudan A."/>
            <person name="Taourit S."/>
            <person name="Bocs S."/>
            <person name="Boursaux-Eude C."/>
            <person name="Chandler M."/>
            <person name="Charles J.-F."/>
            <person name="Dassa E."/>
            <person name="Derose R."/>
            <person name="Derzelle S."/>
            <person name="Freyssinet G."/>
            <person name="Gaudriault S."/>
            <person name="Medigue C."/>
            <person name="Lanois A."/>
            <person name="Powell K."/>
            <person name="Siguier P."/>
            <person name="Vincent R."/>
            <person name="Wingate V."/>
            <person name="Zouine M."/>
            <person name="Glaser P."/>
            <person name="Boemare N."/>
            <person name="Danchin A."/>
            <person name="Kunst F."/>
        </authorList>
    </citation>
    <scope>NUCLEOTIDE SEQUENCE [LARGE SCALE GENOMIC DNA]</scope>
    <source>
        <strain>DSM 15139 / CIP 105565 / TT01</strain>
    </source>
</reference>
<accession>Q7MY30</accession>
<dbReference type="EMBL" id="BX571875">
    <property type="protein sequence ID" value="CAE17235.1"/>
    <property type="molecule type" value="Genomic_DNA"/>
</dbReference>
<dbReference type="RefSeq" id="WP_010847629.1">
    <property type="nucleotide sequence ID" value="NC_005126.1"/>
</dbReference>
<dbReference type="SMR" id="Q7MY30"/>
<dbReference type="STRING" id="243265.plu4863"/>
<dbReference type="GeneID" id="88807308"/>
<dbReference type="GeneID" id="97125623"/>
<dbReference type="KEGG" id="plu:plu4863"/>
<dbReference type="eggNOG" id="COG0267">
    <property type="taxonomic scope" value="Bacteria"/>
</dbReference>
<dbReference type="HOGENOM" id="CLU_190949_1_1_6"/>
<dbReference type="OrthoDB" id="21586at2"/>
<dbReference type="Proteomes" id="UP000002514">
    <property type="component" value="Chromosome"/>
</dbReference>
<dbReference type="GO" id="GO:0022625">
    <property type="term" value="C:cytosolic large ribosomal subunit"/>
    <property type="evidence" value="ECO:0007669"/>
    <property type="project" value="TreeGrafter"/>
</dbReference>
<dbReference type="GO" id="GO:0003735">
    <property type="term" value="F:structural constituent of ribosome"/>
    <property type="evidence" value="ECO:0007669"/>
    <property type="project" value="InterPro"/>
</dbReference>
<dbReference type="GO" id="GO:0006412">
    <property type="term" value="P:translation"/>
    <property type="evidence" value="ECO:0007669"/>
    <property type="project" value="UniProtKB-UniRule"/>
</dbReference>
<dbReference type="FunFam" id="2.20.28.120:FF:000001">
    <property type="entry name" value="50S ribosomal protein L33"/>
    <property type="match status" value="1"/>
</dbReference>
<dbReference type="Gene3D" id="2.20.28.120">
    <property type="entry name" value="Ribosomal protein L33"/>
    <property type="match status" value="1"/>
</dbReference>
<dbReference type="HAMAP" id="MF_00294">
    <property type="entry name" value="Ribosomal_bL33"/>
    <property type="match status" value="1"/>
</dbReference>
<dbReference type="InterPro" id="IPR001705">
    <property type="entry name" value="Ribosomal_bL33"/>
</dbReference>
<dbReference type="InterPro" id="IPR018264">
    <property type="entry name" value="Ribosomal_bL33_CS"/>
</dbReference>
<dbReference type="InterPro" id="IPR038584">
    <property type="entry name" value="Ribosomal_bL33_sf"/>
</dbReference>
<dbReference type="InterPro" id="IPR011332">
    <property type="entry name" value="Ribosomal_zn-bd"/>
</dbReference>
<dbReference type="NCBIfam" id="NF001860">
    <property type="entry name" value="PRK00595.1"/>
    <property type="match status" value="1"/>
</dbReference>
<dbReference type="NCBIfam" id="TIGR01023">
    <property type="entry name" value="rpmG_bact"/>
    <property type="match status" value="1"/>
</dbReference>
<dbReference type="PANTHER" id="PTHR15238">
    <property type="entry name" value="54S RIBOSOMAL PROTEIN L39, MITOCHONDRIAL"/>
    <property type="match status" value="1"/>
</dbReference>
<dbReference type="PANTHER" id="PTHR15238:SF1">
    <property type="entry name" value="LARGE RIBOSOMAL SUBUNIT PROTEIN BL33M"/>
    <property type="match status" value="1"/>
</dbReference>
<dbReference type="Pfam" id="PF00471">
    <property type="entry name" value="Ribosomal_L33"/>
    <property type="match status" value="1"/>
</dbReference>
<dbReference type="SUPFAM" id="SSF57829">
    <property type="entry name" value="Zn-binding ribosomal proteins"/>
    <property type="match status" value="1"/>
</dbReference>
<dbReference type="PROSITE" id="PS00582">
    <property type="entry name" value="RIBOSOMAL_L33"/>
    <property type="match status" value="1"/>
</dbReference>
<name>RL33_PHOLL</name>
<protein>
    <recommendedName>
        <fullName evidence="1">Large ribosomal subunit protein bL33</fullName>
    </recommendedName>
    <alternativeName>
        <fullName evidence="2">50S ribosomal protein L33</fullName>
    </alternativeName>
</protein>